<gene>
    <name type="primary">cbhC</name>
    <name type="ORF">AFUA_3G01910</name>
</gene>
<sequence length="454" mass="47796">MKHLASSIALTLLLPAVQAQQTVWGQCGGQGWSGPTSCVAGAACSTLNPYYAQCIPGATATSTTLTTTTAATTTSQTTTKPTTTGPTTSAPTVTASGNPFSGYQLYANPYYSSEVHTLAMPSLPSSLQPKASAVAEVPSFVWLDVAAKVPTMGTYLADIQAKNKAGANPPIAGIFVVYDLPDRDCAALASNGEYSIANNGVANYKAYIDAIRAQLVKYSDVHTILVIEPDSLANLVTNLNVAKCANAQSAYLECVDYALKQLNLPNVAMYLDAGHAGWLGWPANLGPAATLFAKVYTDAGSPAAVRGLATNVANYNAWSLSTCPSYTQGDPNCDEKKYINAMAPLLKEAGFDAHFIMDTSRNGVQPTKQNAWGDWCNVIGTGFGVRPSTNTGDPLQDAFVWIKPGGESDGTSNSTSPRYDAHCGYSDALQPAPEAGTWFQAYFEQLLTNANPSF</sequence>
<accession>Q4WFK4</accession>
<feature type="signal peptide" evidence="2">
    <location>
        <begin position="1"/>
        <end position="19"/>
    </location>
</feature>
<feature type="chain" id="PRO_0000394051" description="Probable 1,4-beta-D-glucan cellobiohydrolase C">
    <location>
        <begin position="20"/>
        <end position="454"/>
    </location>
</feature>
<feature type="domain" description="CBM1" evidence="3">
    <location>
        <begin position="20"/>
        <end position="55"/>
    </location>
</feature>
<feature type="region of interest" description="Thr-rich linker">
    <location>
        <begin position="59"/>
        <end position="94"/>
    </location>
</feature>
<feature type="region of interest" description="Disordered" evidence="6">
    <location>
        <begin position="68"/>
        <end position="95"/>
    </location>
</feature>
<feature type="region of interest" description="Catalytic">
    <location>
        <begin position="95"/>
        <end position="454"/>
    </location>
</feature>
<feature type="active site" evidence="4">
    <location>
        <position position="184"/>
    </location>
</feature>
<feature type="active site" description="Proton donor" evidence="5">
    <location>
        <position position="230"/>
    </location>
</feature>
<feature type="active site" description="Nucleophile" evidence="4">
    <location>
        <position position="409"/>
    </location>
</feature>
<feature type="glycosylation site" description="N-linked (GlcNAc...) asparagine" evidence="2">
    <location>
        <position position="413"/>
    </location>
</feature>
<feature type="disulfide bond" evidence="1">
    <location>
        <begin position="27"/>
        <end position="44"/>
    </location>
</feature>
<feature type="disulfide bond" evidence="1">
    <location>
        <begin position="38"/>
        <end position="54"/>
    </location>
</feature>
<feature type="disulfide bond" evidence="1">
    <location>
        <begin position="185"/>
        <end position="244"/>
    </location>
</feature>
<feature type="disulfide bond" evidence="1">
    <location>
        <begin position="376"/>
        <end position="423"/>
    </location>
</feature>
<dbReference type="EC" id="3.2.1.91"/>
<dbReference type="EMBL" id="AAHF01000010">
    <property type="protein sequence ID" value="EAL86473.1"/>
    <property type="molecule type" value="Genomic_DNA"/>
</dbReference>
<dbReference type="RefSeq" id="XP_748511.1">
    <property type="nucleotide sequence ID" value="XM_743418.1"/>
</dbReference>
<dbReference type="SMR" id="Q4WFK4"/>
<dbReference type="STRING" id="330879.Q4WFK4"/>
<dbReference type="GlyCosmos" id="Q4WFK4">
    <property type="glycosylation" value="1 site, No reported glycans"/>
</dbReference>
<dbReference type="EnsemblFungi" id="EAL86473">
    <property type="protein sequence ID" value="EAL86473"/>
    <property type="gene ID" value="AFUA_3G01910"/>
</dbReference>
<dbReference type="GeneID" id="3505986"/>
<dbReference type="KEGG" id="afm:AFUA_3G01910"/>
<dbReference type="VEuPathDB" id="FungiDB:Afu3g01910"/>
<dbReference type="eggNOG" id="ENOG502QWHE">
    <property type="taxonomic scope" value="Eukaryota"/>
</dbReference>
<dbReference type="HOGENOM" id="CLU_015488_0_0_1"/>
<dbReference type="InParanoid" id="Q4WFK4"/>
<dbReference type="OMA" id="EVHTLAM"/>
<dbReference type="OrthoDB" id="64893at2759"/>
<dbReference type="Proteomes" id="UP000002530">
    <property type="component" value="Chromosome 3"/>
</dbReference>
<dbReference type="GO" id="GO:0005576">
    <property type="term" value="C:extracellular region"/>
    <property type="evidence" value="ECO:0007669"/>
    <property type="project" value="UniProtKB-SubCell"/>
</dbReference>
<dbReference type="GO" id="GO:0016162">
    <property type="term" value="F:cellulose 1,4-beta-cellobiosidase activity"/>
    <property type="evidence" value="ECO:0007669"/>
    <property type="project" value="UniProtKB-EC"/>
</dbReference>
<dbReference type="GO" id="GO:0030248">
    <property type="term" value="F:cellulose binding"/>
    <property type="evidence" value="ECO:0007669"/>
    <property type="project" value="InterPro"/>
</dbReference>
<dbReference type="GO" id="GO:0030245">
    <property type="term" value="P:cellulose catabolic process"/>
    <property type="evidence" value="ECO:0007669"/>
    <property type="project" value="UniProtKB-KW"/>
</dbReference>
<dbReference type="FunFam" id="3.20.20.40:FF:000001">
    <property type="entry name" value="Glucanase"/>
    <property type="match status" value="1"/>
</dbReference>
<dbReference type="Gene3D" id="3.20.20.40">
    <property type="entry name" value="1, 4-beta cellobiohydrolase"/>
    <property type="match status" value="1"/>
</dbReference>
<dbReference type="InterPro" id="IPR016288">
    <property type="entry name" value="Beta_cellobiohydrolase"/>
</dbReference>
<dbReference type="InterPro" id="IPR036434">
    <property type="entry name" value="Beta_cellobiohydrolase_sf"/>
</dbReference>
<dbReference type="InterPro" id="IPR035971">
    <property type="entry name" value="CBD_sf"/>
</dbReference>
<dbReference type="InterPro" id="IPR000254">
    <property type="entry name" value="Cellulose-bd_dom_fun"/>
</dbReference>
<dbReference type="InterPro" id="IPR001524">
    <property type="entry name" value="Glyco_hydro_6_CS"/>
</dbReference>
<dbReference type="PANTHER" id="PTHR34876">
    <property type="match status" value="1"/>
</dbReference>
<dbReference type="PANTHER" id="PTHR34876:SF4">
    <property type="entry name" value="1,4-BETA-D-GLUCAN CELLOBIOHYDROLASE C-RELATED"/>
    <property type="match status" value="1"/>
</dbReference>
<dbReference type="Pfam" id="PF00734">
    <property type="entry name" value="CBM_1"/>
    <property type="match status" value="1"/>
</dbReference>
<dbReference type="Pfam" id="PF01341">
    <property type="entry name" value="Glyco_hydro_6"/>
    <property type="match status" value="1"/>
</dbReference>
<dbReference type="PIRSF" id="PIRSF001100">
    <property type="entry name" value="Beta_cellobiohydrolase"/>
    <property type="match status" value="1"/>
</dbReference>
<dbReference type="PRINTS" id="PR00733">
    <property type="entry name" value="GLHYDRLASE6"/>
</dbReference>
<dbReference type="SMART" id="SM00236">
    <property type="entry name" value="fCBD"/>
    <property type="match status" value="1"/>
</dbReference>
<dbReference type="SUPFAM" id="SSF57180">
    <property type="entry name" value="Cellulose-binding domain"/>
    <property type="match status" value="1"/>
</dbReference>
<dbReference type="SUPFAM" id="SSF51989">
    <property type="entry name" value="Glycosyl hydrolases family 6, cellulases"/>
    <property type="match status" value="1"/>
</dbReference>
<dbReference type="PROSITE" id="PS00562">
    <property type="entry name" value="CBM1_1"/>
    <property type="match status" value="1"/>
</dbReference>
<dbReference type="PROSITE" id="PS51164">
    <property type="entry name" value="CBM1_2"/>
    <property type="match status" value="1"/>
</dbReference>
<dbReference type="PROSITE" id="PS00655">
    <property type="entry name" value="GLYCOSYL_HYDROL_F6_1"/>
    <property type="match status" value="1"/>
</dbReference>
<dbReference type="PROSITE" id="PS00656">
    <property type="entry name" value="GLYCOSYL_HYDROL_F6_2"/>
    <property type="match status" value="1"/>
</dbReference>
<protein>
    <recommendedName>
        <fullName>Probable 1,4-beta-D-glucan cellobiohydrolase C</fullName>
        <ecNumber>3.2.1.91</ecNumber>
    </recommendedName>
    <alternativeName>
        <fullName>Beta-glucancellobiohydrolase C</fullName>
    </alternativeName>
    <alternativeName>
        <fullName>Exocellobiohydrolase C</fullName>
    </alternativeName>
    <alternativeName>
        <fullName>Exoglucanase C</fullName>
    </alternativeName>
</protein>
<comment type="function">
    <text evidence="1">The biological conversion of cellulose to glucose generally requires three types of hydrolytic enzymes: (1) Endoglucanases which cut internal beta-1,4-glucosidic bonds; (2) Exocellobiohydrolases that cut the disaccharide cellobiose from the non-reducing end of the cellulose polymer chain; (3) Beta-1,4-glucosidases which hydrolyze the cellobiose and other short cello-oligosaccharides to glucose.</text>
</comment>
<comment type="catalytic activity">
    <reaction>
        <text>Hydrolysis of (1-&gt;4)-beta-D-glucosidic linkages in cellulose and cellotetraose, releasing cellobiose from the non-reducing ends of the chains.</text>
        <dbReference type="EC" id="3.2.1.91"/>
    </reaction>
</comment>
<comment type="subcellular location">
    <subcellularLocation>
        <location evidence="1">Secreted</location>
    </subcellularLocation>
</comment>
<comment type="domain">
    <text>Has a modular structure: a carbohydrate-binding module (CBM) at the N-terminus, a linker rich in threonines, and a C-terminal exocellobiohydrolase catalytic module. The genes for catalytic modules and CBMs seem to have evolved separately and have been linked by gene fusion.</text>
</comment>
<comment type="similarity">
    <text evidence="7">Belongs to the glycosyl hydrolase 6 (cellulase B) family.</text>
</comment>
<reference key="1">
    <citation type="journal article" date="2005" name="Nature">
        <title>Genomic sequence of the pathogenic and allergenic filamentous fungus Aspergillus fumigatus.</title>
        <authorList>
            <person name="Nierman W.C."/>
            <person name="Pain A."/>
            <person name="Anderson M.J."/>
            <person name="Wortman J.R."/>
            <person name="Kim H.S."/>
            <person name="Arroyo J."/>
            <person name="Berriman M."/>
            <person name="Abe K."/>
            <person name="Archer D.B."/>
            <person name="Bermejo C."/>
            <person name="Bennett J.W."/>
            <person name="Bowyer P."/>
            <person name="Chen D."/>
            <person name="Collins M."/>
            <person name="Coulsen R."/>
            <person name="Davies R."/>
            <person name="Dyer P.S."/>
            <person name="Farman M.L."/>
            <person name="Fedorova N."/>
            <person name="Fedorova N.D."/>
            <person name="Feldblyum T.V."/>
            <person name="Fischer R."/>
            <person name="Fosker N."/>
            <person name="Fraser A."/>
            <person name="Garcia J.L."/>
            <person name="Garcia M.J."/>
            <person name="Goble A."/>
            <person name="Goldman G.H."/>
            <person name="Gomi K."/>
            <person name="Griffith-Jones S."/>
            <person name="Gwilliam R."/>
            <person name="Haas B.J."/>
            <person name="Haas H."/>
            <person name="Harris D.E."/>
            <person name="Horiuchi H."/>
            <person name="Huang J."/>
            <person name="Humphray S."/>
            <person name="Jimenez J."/>
            <person name="Keller N."/>
            <person name="Khouri H."/>
            <person name="Kitamoto K."/>
            <person name="Kobayashi T."/>
            <person name="Konzack S."/>
            <person name="Kulkarni R."/>
            <person name="Kumagai T."/>
            <person name="Lafton A."/>
            <person name="Latge J.-P."/>
            <person name="Li W."/>
            <person name="Lord A."/>
            <person name="Lu C."/>
            <person name="Majoros W.H."/>
            <person name="May G.S."/>
            <person name="Miller B.L."/>
            <person name="Mohamoud Y."/>
            <person name="Molina M."/>
            <person name="Monod M."/>
            <person name="Mouyna I."/>
            <person name="Mulligan S."/>
            <person name="Murphy L.D."/>
            <person name="O'Neil S."/>
            <person name="Paulsen I."/>
            <person name="Penalva M.A."/>
            <person name="Pertea M."/>
            <person name="Price C."/>
            <person name="Pritchard B.L."/>
            <person name="Quail M.A."/>
            <person name="Rabbinowitsch E."/>
            <person name="Rawlins N."/>
            <person name="Rajandream M.A."/>
            <person name="Reichard U."/>
            <person name="Renauld H."/>
            <person name="Robson G.D."/>
            <person name="Rodriguez de Cordoba S."/>
            <person name="Rodriguez-Pena J.M."/>
            <person name="Ronning C.M."/>
            <person name="Rutter S."/>
            <person name="Salzberg S.L."/>
            <person name="Sanchez M."/>
            <person name="Sanchez-Ferrero J.C."/>
            <person name="Saunders D."/>
            <person name="Seeger K."/>
            <person name="Squares R."/>
            <person name="Squares S."/>
            <person name="Takeuchi M."/>
            <person name="Tekaia F."/>
            <person name="Turner G."/>
            <person name="Vazquez de Aldana C.R."/>
            <person name="Weidman J."/>
            <person name="White O."/>
            <person name="Woodward J.R."/>
            <person name="Yu J.-H."/>
            <person name="Fraser C.M."/>
            <person name="Galagan J.E."/>
            <person name="Asai K."/>
            <person name="Machida M."/>
            <person name="Hall N."/>
            <person name="Barrell B.G."/>
            <person name="Denning D.W."/>
        </authorList>
    </citation>
    <scope>NUCLEOTIDE SEQUENCE [LARGE SCALE GENOMIC DNA]</scope>
    <source>
        <strain>ATCC MYA-4609 / CBS 101355 / FGSC A1100 / Af293</strain>
    </source>
</reference>
<organism>
    <name type="scientific">Aspergillus fumigatus (strain ATCC MYA-4609 / CBS 101355 / FGSC A1100 / Af293)</name>
    <name type="common">Neosartorya fumigata</name>
    <dbReference type="NCBI Taxonomy" id="330879"/>
    <lineage>
        <taxon>Eukaryota</taxon>
        <taxon>Fungi</taxon>
        <taxon>Dikarya</taxon>
        <taxon>Ascomycota</taxon>
        <taxon>Pezizomycotina</taxon>
        <taxon>Eurotiomycetes</taxon>
        <taxon>Eurotiomycetidae</taxon>
        <taxon>Eurotiales</taxon>
        <taxon>Aspergillaceae</taxon>
        <taxon>Aspergillus</taxon>
        <taxon>Aspergillus subgen. Fumigati</taxon>
    </lineage>
</organism>
<keyword id="KW-0119">Carbohydrate metabolism</keyword>
<keyword id="KW-0136">Cellulose degradation</keyword>
<keyword id="KW-1015">Disulfide bond</keyword>
<keyword id="KW-0325">Glycoprotein</keyword>
<keyword id="KW-0326">Glycosidase</keyword>
<keyword id="KW-0378">Hydrolase</keyword>
<keyword id="KW-0624">Polysaccharide degradation</keyword>
<keyword id="KW-1185">Reference proteome</keyword>
<keyword id="KW-0964">Secreted</keyword>
<keyword id="KW-0732">Signal</keyword>
<proteinExistence type="inferred from homology"/>
<evidence type="ECO:0000250" key="1"/>
<evidence type="ECO:0000255" key="2"/>
<evidence type="ECO:0000255" key="3">
    <source>
        <dbReference type="PROSITE-ProRule" id="PRU00597"/>
    </source>
</evidence>
<evidence type="ECO:0000255" key="4">
    <source>
        <dbReference type="PROSITE-ProRule" id="PRU10056"/>
    </source>
</evidence>
<evidence type="ECO:0000255" key="5">
    <source>
        <dbReference type="PROSITE-ProRule" id="PRU10057"/>
    </source>
</evidence>
<evidence type="ECO:0000256" key="6">
    <source>
        <dbReference type="SAM" id="MobiDB-lite"/>
    </source>
</evidence>
<evidence type="ECO:0000305" key="7"/>
<name>CBHC_ASPFU</name>